<accession>Q8E9R5</accession>
<feature type="chain" id="PRO_1000123926" description="Probable protein kinase UbiB">
    <location>
        <begin position="1"/>
        <end position="549"/>
    </location>
</feature>
<feature type="transmembrane region" description="Helical" evidence="1">
    <location>
        <begin position="498"/>
        <end position="518"/>
    </location>
</feature>
<feature type="transmembrane region" description="Helical" evidence="1">
    <location>
        <begin position="520"/>
        <end position="540"/>
    </location>
</feature>
<feature type="domain" description="Protein kinase" evidence="1">
    <location>
        <begin position="123"/>
        <end position="501"/>
    </location>
</feature>
<feature type="active site" description="Proton acceptor" evidence="1">
    <location>
        <position position="287"/>
    </location>
</feature>
<feature type="binding site" evidence="1">
    <location>
        <begin position="129"/>
        <end position="137"/>
    </location>
    <ligand>
        <name>ATP</name>
        <dbReference type="ChEBI" id="CHEBI:30616"/>
    </ligand>
</feature>
<feature type="binding site" evidence="1">
    <location>
        <position position="152"/>
    </location>
    <ligand>
        <name>ATP</name>
        <dbReference type="ChEBI" id="CHEBI:30616"/>
    </ligand>
</feature>
<dbReference type="EC" id="2.7.-.-" evidence="1"/>
<dbReference type="EMBL" id="AE014299">
    <property type="protein sequence ID" value="AAN57173.1"/>
    <property type="molecule type" value="Genomic_DNA"/>
</dbReference>
<dbReference type="RefSeq" id="NP_719729.1">
    <property type="nucleotide sequence ID" value="NC_004347.2"/>
</dbReference>
<dbReference type="RefSeq" id="WP_011073884.1">
    <property type="nucleotide sequence ID" value="NC_004347.2"/>
</dbReference>
<dbReference type="SMR" id="Q8E9R5"/>
<dbReference type="STRING" id="211586.SO_4201"/>
<dbReference type="PaxDb" id="211586-SO_4201"/>
<dbReference type="KEGG" id="son:SO_4201"/>
<dbReference type="PATRIC" id="fig|211586.12.peg.4057"/>
<dbReference type="eggNOG" id="COG0661">
    <property type="taxonomic scope" value="Bacteria"/>
</dbReference>
<dbReference type="HOGENOM" id="CLU_006533_0_0_6"/>
<dbReference type="OrthoDB" id="9795390at2"/>
<dbReference type="PhylomeDB" id="Q8E9R5"/>
<dbReference type="BioCyc" id="SONE211586:G1GMP-3874-MONOMER"/>
<dbReference type="UniPathway" id="UPA00232"/>
<dbReference type="Proteomes" id="UP000008186">
    <property type="component" value="Chromosome"/>
</dbReference>
<dbReference type="GO" id="GO:0005886">
    <property type="term" value="C:plasma membrane"/>
    <property type="evidence" value="ECO:0007669"/>
    <property type="project" value="UniProtKB-SubCell"/>
</dbReference>
<dbReference type="GO" id="GO:0005524">
    <property type="term" value="F:ATP binding"/>
    <property type="evidence" value="ECO:0007669"/>
    <property type="project" value="UniProtKB-KW"/>
</dbReference>
<dbReference type="GO" id="GO:0004672">
    <property type="term" value="F:protein kinase activity"/>
    <property type="evidence" value="ECO:0007669"/>
    <property type="project" value="UniProtKB-UniRule"/>
</dbReference>
<dbReference type="GO" id="GO:0010795">
    <property type="term" value="P:regulation of ubiquinone biosynthetic process"/>
    <property type="evidence" value="ECO:0007669"/>
    <property type="project" value="UniProtKB-UniRule"/>
</dbReference>
<dbReference type="GO" id="GO:0006744">
    <property type="term" value="P:ubiquinone biosynthetic process"/>
    <property type="evidence" value="ECO:0007669"/>
    <property type="project" value="UniProtKB-UniPathway"/>
</dbReference>
<dbReference type="CDD" id="cd13972">
    <property type="entry name" value="UbiB"/>
    <property type="match status" value="1"/>
</dbReference>
<dbReference type="HAMAP" id="MF_00414">
    <property type="entry name" value="UbiB"/>
    <property type="match status" value="1"/>
</dbReference>
<dbReference type="InterPro" id="IPR004147">
    <property type="entry name" value="ABC1_dom"/>
</dbReference>
<dbReference type="InterPro" id="IPR011009">
    <property type="entry name" value="Kinase-like_dom_sf"/>
</dbReference>
<dbReference type="InterPro" id="IPR010232">
    <property type="entry name" value="UbiB"/>
</dbReference>
<dbReference type="InterPro" id="IPR045308">
    <property type="entry name" value="UbiB_bact"/>
</dbReference>
<dbReference type="InterPro" id="IPR050154">
    <property type="entry name" value="UbiB_kinase"/>
</dbReference>
<dbReference type="NCBIfam" id="NF003404">
    <property type="entry name" value="PRK04750.1"/>
    <property type="match status" value="1"/>
</dbReference>
<dbReference type="NCBIfam" id="TIGR01982">
    <property type="entry name" value="UbiB"/>
    <property type="match status" value="1"/>
</dbReference>
<dbReference type="PANTHER" id="PTHR10566">
    <property type="entry name" value="CHAPERONE-ACTIVITY OF BC1 COMPLEX CABC1 -RELATED"/>
    <property type="match status" value="1"/>
</dbReference>
<dbReference type="PANTHER" id="PTHR10566:SF113">
    <property type="entry name" value="PROTEIN ACTIVITY OF BC1 COMPLEX KINASE 7, CHLOROPLASTIC"/>
    <property type="match status" value="1"/>
</dbReference>
<dbReference type="Pfam" id="PF03109">
    <property type="entry name" value="ABC1"/>
    <property type="match status" value="1"/>
</dbReference>
<dbReference type="SUPFAM" id="SSF56112">
    <property type="entry name" value="Protein kinase-like (PK-like)"/>
    <property type="match status" value="1"/>
</dbReference>
<evidence type="ECO:0000255" key="1">
    <source>
        <dbReference type="HAMAP-Rule" id="MF_00414"/>
    </source>
</evidence>
<sequence>MTLASIRRGYHVIKTLLQYGLDDVLPPKMTPWYFTLARNSLFWIRNKHKDKSGGERLKLAMQELGPVYIKLGQMLSTRRDLLSDEWATELAMLQDKVPPFDGALARLAIEAELKAPIETFFDDFNETPLASASISQVHTATLKSNGKAVVLKVLRPNVETKIQADLLLMSQTAKVIDYLLGEGNRLRPAEVIEDYRVTILGELNLKLEALNAIKLRNNFIDSDALYIPYVYEEFCYPRLMVMERIYGIPVSDIVALKAQGTNFKLLAERGVELFFTQVFRDNFFHADMHPGNIFISRENPENPYYIGLDCGIMGTLSEVDKRYLAENFLAFFNRDYHRIAQLYIESGWVSEKTDLQAFEQAIKVVCEPMFNKPLDEISFGHVLLELFRTARHFDIVVQPQLVLLEKTLLYIEGLGRQLYPQLDLWQTAKPFLEQWMAEQVGPKAMFKKVSTKLPYWSDKLPEFPELIYDNLKLGRKLLSSQQQMLDKYLKYQQQAHKSNYLLITSAILLICGTLLFNQDATLLSPYVCLISGAVLWIIGWRSRPKNRKF</sequence>
<proteinExistence type="inferred from homology"/>
<keyword id="KW-0067">ATP-binding</keyword>
<keyword id="KW-0997">Cell inner membrane</keyword>
<keyword id="KW-1003">Cell membrane</keyword>
<keyword id="KW-0418">Kinase</keyword>
<keyword id="KW-0472">Membrane</keyword>
<keyword id="KW-0547">Nucleotide-binding</keyword>
<keyword id="KW-1185">Reference proteome</keyword>
<keyword id="KW-0808">Transferase</keyword>
<keyword id="KW-0812">Transmembrane</keyword>
<keyword id="KW-1133">Transmembrane helix</keyword>
<keyword id="KW-0831">Ubiquinone biosynthesis</keyword>
<organism>
    <name type="scientific">Shewanella oneidensis (strain ATCC 700550 / JCM 31522 / CIP 106686 / LMG 19005 / NCIMB 14063 / MR-1)</name>
    <dbReference type="NCBI Taxonomy" id="211586"/>
    <lineage>
        <taxon>Bacteria</taxon>
        <taxon>Pseudomonadati</taxon>
        <taxon>Pseudomonadota</taxon>
        <taxon>Gammaproteobacteria</taxon>
        <taxon>Alteromonadales</taxon>
        <taxon>Shewanellaceae</taxon>
        <taxon>Shewanella</taxon>
    </lineage>
</organism>
<comment type="function">
    <text evidence="1">Is probably a protein kinase regulator of UbiI activity which is involved in aerobic coenzyme Q (ubiquinone) biosynthesis.</text>
</comment>
<comment type="pathway">
    <text>Cofactor biosynthesis; ubiquinone biosynthesis [regulation].</text>
</comment>
<comment type="subcellular location">
    <subcellularLocation>
        <location evidence="1">Cell inner membrane</location>
        <topology evidence="1">Multi-pass membrane protein</topology>
    </subcellularLocation>
</comment>
<comment type="similarity">
    <text evidence="1">Belongs to the ABC1 family. UbiB subfamily.</text>
</comment>
<gene>
    <name evidence="1" type="primary">ubiB</name>
    <name type="ordered locus">SO_4201</name>
</gene>
<name>UBIB_SHEON</name>
<reference key="1">
    <citation type="journal article" date="2002" name="Nat. Biotechnol.">
        <title>Genome sequence of the dissimilatory metal ion-reducing bacterium Shewanella oneidensis.</title>
        <authorList>
            <person name="Heidelberg J.F."/>
            <person name="Paulsen I.T."/>
            <person name="Nelson K.E."/>
            <person name="Gaidos E.J."/>
            <person name="Nelson W.C."/>
            <person name="Read T.D."/>
            <person name="Eisen J.A."/>
            <person name="Seshadri R."/>
            <person name="Ward N.L."/>
            <person name="Methe B.A."/>
            <person name="Clayton R.A."/>
            <person name="Meyer T."/>
            <person name="Tsapin A."/>
            <person name="Scott J."/>
            <person name="Beanan M.J."/>
            <person name="Brinkac L.M."/>
            <person name="Daugherty S.C."/>
            <person name="DeBoy R.T."/>
            <person name="Dodson R.J."/>
            <person name="Durkin A.S."/>
            <person name="Haft D.H."/>
            <person name="Kolonay J.F."/>
            <person name="Madupu R."/>
            <person name="Peterson J.D."/>
            <person name="Umayam L.A."/>
            <person name="White O."/>
            <person name="Wolf A.M."/>
            <person name="Vamathevan J.J."/>
            <person name="Weidman J.F."/>
            <person name="Impraim M."/>
            <person name="Lee K."/>
            <person name="Berry K.J."/>
            <person name="Lee C."/>
            <person name="Mueller J."/>
            <person name="Khouri H.M."/>
            <person name="Gill J."/>
            <person name="Utterback T.R."/>
            <person name="McDonald L.A."/>
            <person name="Feldblyum T.V."/>
            <person name="Smith H.O."/>
            <person name="Venter J.C."/>
            <person name="Nealson K.H."/>
            <person name="Fraser C.M."/>
        </authorList>
    </citation>
    <scope>NUCLEOTIDE SEQUENCE [LARGE SCALE GENOMIC DNA]</scope>
    <source>
        <strain>ATCC 700550 / JCM 31522 / CIP 106686 / LMG 19005 / NCIMB 14063 / MR-1</strain>
    </source>
</reference>
<protein>
    <recommendedName>
        <fullName evidence="1">Probable protein kinase UbiB</fullName>
        <ecNumber evidence="1">2.7.-.-</ecNumber>
    </recommendedName>
    <alternativeName>
        <fullName evidence="1">Ubiquinone biosynthesis protein UbiB</fullName>
    </alternativeName>
</protein>